<comment type="function">
    <text evidence="1">Involved in the urea cycle of ureotelic animals where the enzyme plays an important role in removing excess ammonia from the cell.</text>
</comment>
<comment type="catalytic activity">
    <reaction evidence="2">
        <text>hydrogencarbonate + NH4(+) + 2 ATP = carbamoyl phosphate + 2 ADP + phosphate + 2 H(+)</text>
        <dbReference type="Rhea" id="RHEA:18029"/>
        <dbReference type="ChEBI" id="CHEBI:15378"/>
        <dbReference type="ChEBI" id="CHEBI:17544"/>
        <dbReference type="ChEBI" id="CHEBI:28938"/>
        <dbReference type="ChEBI" id="CHEBI:30616"/>
        <dbReference type="ChEBI" id="CHEBI:43474"/>
        <dbReference type="ChEBI" id="CHEBI:58228"/>
        <dbReference type="ChEBI" id="CHEBI:456216"/>
        <dbReference type="EC" id="6.3.4.16"/>
    </reaction>
</comment>
<comment type="activity regulation">
    <text evidence="1">Requires N-acetyl-L-glutamate (NAG) as an allosteric activator.</text>
</comment>
<comment type="subcellular location">
    <subcellularLocation>
        <location>Mitochondrion</location>
    </subcellularLocation>
</comment>
<dbReference type="EC" id="6.3.4.16"/>
<dbReference type="EMBL" id="U05193">
    <property type="protein sequence ID" value="AAA19016.1"/>
    <property type="molecule type" value="mRNA"/>
</dbReference>
<dbReference type="PIR" id="I51170">
    <property type="entry name" value="I51170"/>
</dbReference>
<dbReference type="SMR" id="Q91293"/>
<dbReference type="GO" id="GO:0005951">
    <property type="term" value="C:carbamoyl-phosphate synthase complex"/>
    <property type="evidence" value="ECO:0007669"/>
    <property type="project" value="TreeGrafter"/>
</dbReference>
<dbReference type="GO" id="GO:0005739">
    <property type="term" value="C:mitochondrion"/>
    <property type="evidence" value="ECO:0007669"/>
    <property type="project" value="UniProtKB-SubCell"/>
</dbReference>
<dbReference type="GO" id="GO:0005524">
    <property type="term" value="F:ATP binding"/>
    <property type="evidence" value="ECO:0007669"/>
    <property type="project" value="UniProtKB-KW"/>
</dbReference>
<dbReference type="GO" id="GO:0004087">
    <property type="term" value="F:carbamoyl-phosphate synthase (ammonia) activity"/>
    <property type="evidence" value="ECO:0007669"/>
    <property type="project" value="UniProtKB-EC"/>
</dbReference>
<dbReference type="GO" id="GO:0004088">
    <property type="term" value="F:carbamoyl-phosphate synthase (glutamine-hydrolyzing) activity"/>
    <property type="evidence" value="ECO:0007669"/>
    <property type="project" value="InterPro"/>
</dbReference>
<dbReference type="GO" id="GO:0046872">
    <property type="term" value="F:metal ion binding"/>
    <property type="evidence" value="ECO:0007669"/>
    <property type="project" value="InterPro"/>
</dbReference>
<dbReference type="GO" id="GO:0006207">
    <property type="term" value="P:'de novo' pyrimidine nucleobase biosynthetic process"/>
    <property type="evidence" value="ECO:0007669"/>
    <property type="project" value="InterPro"/>
</dbReference>
<dbReference type="GO" id="GO:0006541">
    <property type="term" value="P:glutamine metabolic process"/>
    <property type="evidence" value="ECO:0007669"/>
    <property type="project" value="InterPro"/>
</dbReference>
<dbReference type="GO" id="GO:0006526">
    <property type="term" value="P:L-arginine biosynthetic process"/>
    <property type="evidence" value="ECO:0007669"/>
    <property type="project" value="TreeGrafter"/>
</dbReference>
<dbReference type="GO" id="GO:0000050">
    <property type="term" value="P:urea cycle"/>
    <property type="evidence" value="ECO:0007669"/>
    <property type="project" value="UniProtKB-KW"/>
</dbReference>
<dbReference type="CDD" id="cd01744">
    <property type="entry name" value="GATase1_CPSase"/>
    <property type="match status" value="1"/>
</dbReference>
<dbReference type="CDD" id="cd01423">
    <property type="entry name" value="MGS_CPS_I_III"/>
    <property type="match status" value="1"/>
</dbReference>
<dbReference type="FunFam" id="3.30.470.20:FF:000030">
    <property type="entry name" value="Carbamoyl-phosphate synthase 1, mitochondrial"/>
    <property type="match status" value="1"/>
</dbReference>
<dbReference type="FunFam" id="3.40.50.20:FF:000012">
    <property type="entry name" value="Carbamoyl-phosphate synthase 1, mitochondrial"/>
    <property type="match status" value="1"/>
</dbReference>
<dbReference type="FunFam" id="3.40.50.880:FF:000006">
    <property type="entry name" value="Carbamoyl-phosphate synthase 1, mitochondrial"/>
    <property type="match status" value="1"/>
</dbReference>
<dbReference type="FunFam" id="3.50.30.20:FF:000002">
    <property type="entry name" value="Carbamoyl-phosphate synthase 1, mitochondrial"/>
    <property type="match status" value="1"/>
</dbReference>
<dbReference type="FunFam" id="3.40.50.1380:FF:000010">
    <property type="entry name" value="carbamoyl-phosphate synthase [ammonia], mitochondrial"/>
    <property type="match status" value="1"/>
</dbReference>
<dbReference type="FunFam" id="1.10.1030.10:FF:000001">
    <property type="entry name" value="Carbamoyl-phosphate synthase large chain"/>
    <property type="match status" value="1"/>
</dbReference>
<dbReference type="FunFam" id="3.30.1490.20:FF:000001">
    <property type="entry name" value="Carbamoyl-phosphate synthase large chain"/>
    <property type="match status" value="1"/>
</dbReference>
<dbReference type="FunFam" id="3.30.470.20:FF:000001">
    <property type="entry name" value="Carbamoyl-phosphate synthase large chain"/>
    <property type="match status" value="1"/>
</dbReference>
<dbReference type="FunFam" id="3.40.50.20:FF:000002">
    <property type="entry name" value="Carbamoyl-phosphate synthase large chain"/>
    <property type="match status" value="1"/>
</dbReference>
<dbReference type="Gene3D" id="3.40.50.20">
    <property type="match status" value="2"/>
</dbReference>
<dbReference type="Gene3D" id="3.40.50.880">
    <property type="match status" value="1"/>
</dbReference>
<dbReference type="Gene3D" id="3.30.1490.20">
    <property type="entry name" value="ATP-grasp fold, A domain"/>
    <property type="match status" value="1"/>
</dbReference>
<dbReference type="Gene3D" id="3.30.470.20">
    <property type="entry name" value="ATP-grasp fold, B domain"/>
    <property type="match status" value="2"/>
</dbReference>
<dbReference type="Gene3D" id="3.50.30.20">
    <property type="entry name" value="Carbamoyl-phosphate synthase small subunit, N-terminal domain"/>
    <property type="match status" value="1"/>
</dbReference>
<dbReference type="Gene3D" id="1.10.1030.10">
    <property type="entry name" value="Carbamoyl-phosphate synthetase, large subunit oligomerisation domain"/>
    <property type="match status" value="1"/>
</dbReference>
<dbReference type="Gene3D" id="3.40.50.1380">
    <property type="entry name" value="Methylglyoxal synthase-like domain"/>
    <property type="match status" value="1"/>
</dbReference>
<dbReference type="HAMAP" id="MF_01209">
    <property type="entry name" value="CPSase_S_chain"/>
    <property type="match status" value="1"/>
</dbReference>
<dbReference type="InterPro" id="IPR011761">
    <property type="entry name" value="ATP-grasp"/>
</dbReference>
<dbReference type="InterPro" id="IPR013815">
    <property type="entry name" value="ATP_grasp_subdomain_1"/>
</dbReference>
<dbReference type="InterPro" id="IPR006275">
    <property type="entry name" value="CarbamoylP_synth_lsu"/>
</dbReference>
<dbReference type="InterPro" id="IPR005480">
    <property type="entry name" value="CarbamoylP_synth_lsu_oligo"/>
</dbReference>
<dbReference type="InterPro" id="IPR036897">
    <property type="entry name" value="CarbamoylP_synth_lsu_oligo_sf"/>
</dbReference>
<dbReference type="InterPro" id="IPR006274">
    <property type="entry name" value="CarbamoylP_synth_ssu"/>
</dbReference>
<dbReference type="InterPro" id="IPR002474">
    <property type="entry name" value="CarbamoylP_synth_ssu_N"/>
</dbReference>
<dbReference type="InterPro" id="IPR036480">
    <property type="entry name" value="CarbP_synth_ssu_N_sf"/>
</dbReference>
<dbReference type="InterPro" id="IPR005479">
    <property type="entry name" value="CbamoylP_synth_lsu-like_ATP-bd"/>
</dbReference>
<dbReference type="InterPro" id="IPR005483">
    <property type="entry name" value="CbamoylP_synth_lsu_CPSase_dom"/>
</dbReference>
<dbReference type="InterPro" id="IPR029062">
    <property type="entry name" value="Class_I_gatase-like"/>
</dbReference>
<dbReference type="InterPro" id="IPR035686">
    <property type="entry name" value="CPSase_GATase1"/>
</dbReference>
<dbReference type="InterPro" id="IPR017926">
    <property type="entry name" value="GATASE"/>
</dbReference>
<dbReference type="InterPro" id="IPR011607">
    <property type="entry name" value="MGS-like_dom"/>
</dbReference>
<dbReference type="InterPro" id="IPR036914">
    <property type="entry name" value="MGS-like_dom_sf"/>
</dbReference>
<dbReference type="InterPro" id="IPR016185">
    <property type="entry name" value="PreATP-grasp_dom_sf"/>
</dbReference>
<dbReference type="NCBIfam" id="TIGR01369">
    <property type="entry name" value="CPSaseII_lrg"/>
    <property type="match status" value="1"/>
</dbReference>
<dbReference type="NCBIfam" id="TIGR01368">
    <property type="entry name" value="CPSaseIIsmall"/>
    <property type="match status" value="1"/>
</dbReference>
<dbReference type="NCBIfam" id="NF003671">
    <property type="entry name" value="PRK05294.1"/>
    <property type="match status" value="1"/>
</dbReference>
<dbReference type="NCBIfam" id="NF009455">
    <property type="entry name" value="PRK12815.1"/>
    <property type="match status" value="1"/>
</dbReference>
<dbReference type="NCBIfam" id="NF009475">
    <property type="entry name" value="PRK12838.1"/>
    <property type="match status" value="1"/>
</dbReference>
<dbReference type="PANTHER" id="PTHR11405:SF4">
    <property type="entry name" value="CARBAMOYL-PHOSPHATE SYNTHASE ARGININE-SPECIFIC SMALL CHAIN"/>
    <property type="match status" value="1"/>
</dbReference>
<dbReference type="PANTHER" id="PTHR11405">
    <property type="entry name" value="CARBAMOYLTRANSFERASE FAMILY MEMBER"/>
    <property type="match status" value="1"/>
</dbReference>
<dbReference type="Pfam" id="PF02786">
    <property type="entry name" value="CPSase_L_D2"/>
    <property type="match status" value="2"/>
</dbReference>
<dbReference type="Pfam" id="PF02787">
    <property type="entry name" value="CPSase_L_D3"/>
    <property type="match status" value="1"/>
</dbReference>
<dbReference type="Pfam" id="PF00988">
    <property type="entry name" value="CPSase_sm_chain"/>
    <property type="match status" value="1"/>
</dbReference>
<dbReference type="Pfam" id="PF00117">
    <property type="entry name" value="GATase"/>
    <property type="match status" value="1"/>
</dbReference>
<dbReference type="Pfam" id="PF02142">
    <property type="entry name" value="MGS"/>
    <property type="match status" value="1"/>
</dbReference>
<dbReference type="PRINTS" id="PR00098">
    <property type="entry name" value="CPSASE"/>
</dbReference>
<dbReference type="PRINTS" id="PR00099">
    <property type="entry name" value="CPSGATASE"/>
</dbReference>
<dbReference type="PRINTS" id="PR00096">
    <property type="entry name" value="GATASE"/>
</dbReference>
<dbReference type="SMART" id="SM01096">
    <property type="entry name" value="CPSase_L_D3"/>
    <property type="match status" value="1"/>
</dbReference>
<dbReference type="SMART" id="SM01097">
    <property type="entry name" value="CPSase_sm_chain"/>
    <property type="match status" value="1"/>
</dbReference>
<dbReference type="SMART" id="SM00851">
    <property type="entry name" value="MGS"/>
    <property type="match status" value="1"/>
</dbReference>
<dbReference type="SUPFAM" id="SSF48108">
    <property type="entry name" value="Carbamoyl phosphate synthetase, large subunit connection domain"/>
    <property type="match status" value="1"/>
</dbReference>
<dbReference type="SUPFAM" id="SSF52021">
    <property type="entry name" value="Carbamoyl phosphate synthetase, small subunit N-terminal domain"/>
    <property type="match status" value="1"/>
</dbReference>
<dbReference type="SUPFAM" id="SSF52317">
    <property type="entry name" value="Class I glutamine amidotransferase-like"/>
    <property type="match status" value="1"/>
</dbReference>
<dbReference type="SUPFAM" id="SSF56059">
    <property type="entry name" value="Glutathione synthetase ATP-binding domain-like"/>
    <property type="match status" value="2"/>
</dbReference>
<dbReference type="SUPFAM" id="SSF52335">
    <property type="entry name" value="Methylglyoxal synthase-like"/>
    <property type="match status" value="1"/>
</dbReference>
<dbReference type="SUPFAM" id="SSF52440">
    <property type="entry name" value="PreATP-grasp domain"/>
    <property type="match status" value="2"/>
</dbReference>
<dbReference type="PROSITE" id="PS50975">
    <property type="entry name" value="ATP_GRASP"/>
    <property type="match status" value="2"/>
</dbReference>
<dbReference type="PROSITE" id="PS00866">
    <property type="entry name" value="CPSASE_1"/>
    <property type="match status" value="2"/>
</dbReference>
<dbReference type="PROSITE" id="PS00867">
    <property type="entry name" value="CPSASE_2"/>
    <property type="match status" value="2"/>
</dbReference>
<dbReference type="PROSITE" id="PS51273">
    <property type="entry name" value="GATASE_TYPE_1"/>
    <property type="match status" value="1"/>
</dbReference>
<dbReference type="PROSITE" id="PS51855">
    <property type="entry name" value="MGS"/>
    <property type="match status" value="1"/>
</dbReference>
<feature type="transit peptide" description="Mitochondrion" evidence="1">
    <location>
        <begin position="1"/>
        <end position="33"/>
    </location>
</feature>
<feature type="chain" id="PRO_0000029900" description="Carbamoyl-phosphate synthase [ammonia], mitochondrial">
    <location>
        <begin position="34"/>
        <end position="1496"/>
    </location>
</feature>
<feature type="domain" description="Glutamine amidotransferase type-1">
    <location>
        <begin position="215"/>
        <end position="401"/>
    </location>
</feature>
<feature type="domain" description="ATP-grasp 1">
    <location>
        <begin position="548"/>
        <end position="740"/>
    </location>
</feature>
<feature type="domain" description="ATP-grasp 2">
    <location>
        <begin position="1090"/>
        <end position="1281"/>
    </location>
</feature>
<feature type="domain" description="MGS-like" evidence="3">
    <location>
        <begin position="1352"/>
        <end position="1496"/>
    </location>
</feature>
<feature type="region of interest" description="Anthranilate phosphoribosyltransferase homolog">
    <location>
        <begin position="34"/>
        <end position="214"/>
    </location>
</feature>
<feature type="active site" description="For GATase activity" evidence="1">
    <location>
        <position position="290"/>
    </location>
</feature>
<feature type="binding site" evidence="1">
    <location>
        <position position="1388"/>
    </location>
    <ligand>
        <name>N-acetyl-L-glutamate</name>
        <dbReference type="ChEBI" id="CHEBI:44337"/>
        <note>allosteric activator</note>
    </ligand>
</feature>
<feature type="binding site" evidence="1">
    <location>
        <position position="1391"/>
    </location>
    <ligand>
        <name>N-acetyl-L-glutamate</name>
        <dbReference type="ChEBI" id="CHEBI:44337"/>
        <note>allosteric activator</note>
    </ligand>
</feature>
<feature type="binding site" evidence="1">
    <location>
        <position position="1407"/>
    </location>
    <ligand>
        <name>N-acetyl-L-glutamate</name>
        <dbReference type="ChEBI" id="CHEBI:44337"/>
        <note>allosteric activator</note>
    </ligand>
</feature>
<feature type="binding site" evidence="1">
    <location>
        <position position="1433"/>
    </location>
    <ligand>
        <name>N-acetyl-L-glutamate</name>
        <dbReference type="ChEBI" id="CHEBI:44337"/>
        <note>allosteric activator</note>
    </ligand>
</feature>
<feature type="binding site" evidence="1">
    <location>
        <position position="1436"/>
    </location>
    <ligand>
        <name>N-acetyl-L-glutamate</name>
        <dbReference type="ChEBI" id="CHEBI:44337"/>
        <note>allosteric activator</note>
    </ligand>
</feature>
<feature type="binding site" evidence="1">
    <location>
        <position position="1445"/>
    </location>
    <ligand>
        <name>N-acetyl-L-glutamate</name>
        <dbReference type="ChEBI" id="CHEBI:44337"/>
        <note>allosteric activator</note>
    </ligand>
</feature>
<accession>Q91293</accession>
<evidence type="ECO:0000250" key="1"/>
<evidence type="ECO:0000250" key="2">
    <source>
        <dbReference type="UniProtKB" id="P07756"/>
    </source>
</evidence>
<evidence type="ECO:0000255" key="3">
    <source>
        <dbReference type="PROSITE-ProRule" id="PRU01202"/>
    </source>
</evidence>
<sequence>MTRILSVFKTAKTGVLNAAAHRYRGFSKAGVRLMSVKAQTANLVLEDGTKIKGYSFGHPASVAGEVIFNTGLGGYVEAVTDPSYHGQILTLTNPIIGNGGAPDTKARDAYGLMKYIESENIQASGLLVLDYSHEYSHWGAVKSLSEWLHEEKVPALCGIDTRMLAKKIRDNKGAVLGKIEFEGQPVEFIDPNKRNLIAEVSTKETKVFGKGNPVRIVAVDCGVKHNIIRQLVKRGAEVHLVPWNHDFSQMEYDGLLITSGPGNPELAKPLIQNLKKVFQSDRPEPIFGICKGNEIAALAAGGKTYRLPMANRGQNQPVMITLNGQAFITAQNHAYAVDNNSLPAGWKPLFVNINDQSNEGIMHETKPIFTSQFHPEANPGPVDTEFLFDVYMSLIKKGKGTTLTSVMPKPALQSKRIDVAKVLILGSGGLSIGQAGEFDYSGSQAVKAMKEENVKTVLMNPNIASVQTNEVGLKQADTVYFLPITPQFVTEVIKAEKTDGIILGMGGQTALNCGVELFKRGVLKEYGVRVLGTSVESIMFTEDRQLFSDKLNEIKEPIAPSFAVESVKDALEAADKIGYPVMIRSAYALGGLGSGLCPDKETLTDLATKALAMTNQILVERSVVGWKEIEYEVVRDAADNCVTVCNMENVDAMGVHTGDSIVVAPCQTLSNEECQMLRAVSIKVVRHLGIVGECNIQFALHPTSLEYVIIEVNARLSRSSALASKATGYPLAFIAAKIALGIPLPEIKNVVSGKTTACFEPSLDYMVTKIPRWDLDRFHGASGLIGSSMKSVGEVMAIGRTFEESFQKALRMCHPSVDGFTSNLPMNKAWSSDVNLRKEMAEPTSTRMYSMAKAIQSGISLDEINKLTAIDKWFLYKMQGILNMEKTLKGSRSESVPEETLRRAKQIGFSDRYIGKCLGLSETQTRELRLNKNVKPWVKQIDTLAAEYPAITNYLYLTYNGQEHDIKFDDHGMMVLGCGPYHIGSSVEFDWCAVSSIRTLRHVGKKTVVVNCNPETVSTDFDECDKLYFEELSQERIMDVFQLEQCDGCIISVGGQIPNNLAVPLYKNGVKIMGTSPMQIDRAEDRSIFSAVLDELQIAQAPWKAVNSLDDALQFTKTVGYPCLLRPSYVLSGSAMNVVYGEEELKTFLAEATRVSQEHPVVITKFIEGAREVEMDAVGKEGRVISHAISEHVEDAGVHSGDATLMIPTQSISQGAIEKVKIATKKIATAFAISGPFNVQFLVRGNDVLVIECNLRASRSFPFVSKTLGVDFIDVATKVMIGEKIDESSLPTLERPVIPADYVGIKAPMFSWPRLRGADPVLKCEMASTGEVACFGQNVYSAFLKAMISTGFKLPQKGILIGIQHSFRPHFLGTAQTLKDEGFKLYATEATADWLNANDITATPVAWPSQEGQSGPSSIYKLIKEGNIDMVINLPNNNTKYVRDNFAIRRTAVDTGTALLTNFQVVKMFAEAIKYSGDLDAKSLFHYRQFGGAKPS</sequence>
<reference key="1">
    <citation type="journal article" date="1994" name="J. Biol. Chem.">
        <title>3,5,3'-Triiodothyronine-induced carbamyl-phosphate synthetase gene expression is stabilized in the liver of Rana catesbeiana tadpoles during heat shock.</title>
        <authorList>
            <person name="Helbing C.C."/>
            <person name="Atkinson B.G."/>
        </authorList>
    </citation>
    <scope>NUCLEOTIDE SEQUENCE [MRNA]</scope>
    <source>
        <tissue>Liver</tissue>
    </source>
</reference>
<name>CPSM_AQUCT</name>
<protein>
    <recommendedName>
        <fullName>Carbamoyl-phosphate synthase [ammonia], mitochondrial</fullName>
        <ecNumber>6.3.4.16</ecNumber>
    </recommendedName>
    <alternativeName>
        <fullName>Carbamoyl-phosphate synthetase I</fullName>
        <shortName>CPSase I</shortName>
    </alternativeName>
</protein>
<proteinExistence type="evidence at transcript level"/>
<organism>
    <name type="scientific">Aquarana catesbeiana</name>
    <name type="common">American bullfrog</name>
    <name type="synonym">Rana catesbeiana</name>
    <dbReference type="NCBI Taxonomy" id="8400"/>
    <lineage>
        <taxon>Eukaryota</taxon>
        <taxon>Metazoa</taxon>
        <taxon>Chordata</taxon>
        <taxon>Craniata</taxon>
        <taxon>Vertebrata</taxon>
        <taxon>Euteleostomi</taxon>
        <taxon>Amphibia</taxon>
        <taxon>Batrachia</taxon>
        <taxon>Anura</taxon>
        <taxon>Neobatrachia</taxon>
        <taxon>Ranoidea</taxon>
        <taxon>Ranidae</taxon>
        <taxon>Aquarana</taxon>
    </lineage>
</organism>
<keyword id="KW-0021">Allosteric enzyme</keyword>
<keyword id="KW-0067">ATP-binding</keyword>
<keyword id="KW-0436">Ligase</keyword>
<keyword id="KW-0496">Mitochondrion</keyword>
<keyword id="KW-0547">Nucleotide-binding</keyword>
<keyword id="KW-0677">Repeat</keyword>
<keyword id="KW-0809">Transit peptide</keyword>
<keyword id="KW-0835">Urea cycle</keyword>